<evidence type="ECO:0000250" key="1">
    <source>
        <dbReference type="UniProtKB" id="P03901"/>
    </source>
</evidence>
<evidence type="ECO:0000250" key="2">
    <source>
        <dbReference type="UniProtKB" id="P03902"/>
    </source>
</evidence>
<evidence type="ECO:0000255" key="3"/>
<evidence type="ECO:0000305" key="4"/>
<feature type="chain" id="PRO_0000274981" description="NADH-ubiquinone oxidoreductase chain 4L">
    <location>
        <begin position="1"/>
        <end position="98"/>
    </location>
</feature>
<feature type="transmembrane region" description="Helical" evidence="3">
    <location>
        <begin position="1"/>
        <end position="21"/>
    </location>
</feature>
<feature type="transmembrane region" description="Helical" evidence="3">
    <location>
        <begin position="29"/>
        <end position="49"/>
    </location>
</feature>
<feature type="transmembrane region" description="Helical" evidence="3">
    <location>
        <begin position="61"/>
        <end position="81"/>
    </location>
</feature>
<comment type="function">
    <text evidence="1">Core subunit of the mitochondrial membrane respiratory chain NADH dehydrogenase (Complex I) which catalyzes electron transfer from NADH through the respiratory chain, using ubiquinone as an electron acceptor. Part of the enzyme membrane arm which is embedded in the lipid bilayer and involved in proton translocation.</text>
</comment>
<comment type="catalytic activity">
    <reaction evidence="1">
        <text>a ubiquinone + NADH + 5 H(+)(in) = a ubiquinol + NAD(+) + 4 H(+)(out)</text>
        <dbReference type="Rhea" id="RHEA:29091"/>
        <dbReference type="Rhea" id="RHEA-COMP:9565"/>
        <dbReference type="Rhea" id="RHEA-COMP:9566"/>
        <dbReference type="ChEBI" id="CHEBI:15378"/>
        <dbReference type="ChEBI" id="CHEBI:16389"/>
        <dbReference type="ChEBI" id="CHEBI:17976"/>
        <dbReference type="ChEBI" id="CHEBI:57540"/>
        <dbReference type="ChEBI" id="CHEBI:57945"/>
        <dbReference type="EC" id="7.1.1.2"/>
    </reaction>
    <physiologicalReaction direction="left-to-right" evidence="1">
        <dbReference type="Rhea" id="RHEA:29092"/>
    </physiologicalReaction>
</comment>
<comment type="subunit">
    <text evidence="2">Core subunit of respiratory chain NADH dehydrogenase (Complex I) which is composed of 45 different subunits.</text>
</comment>
<comment type="subcellular location">
    <subcellularLocation>
        <location evidence="2">Mitochondrion inner membrane</location>
        <topology evidence="3">Multi-pass membrane protein</topology>
    </subcellularLocation>
</comment>
<comment type="similarity">
    <text evidence="4">Belongs to the complex I subunit 4L family.</text>
</comment>
<dbReference type="EC" id="7.1.1.2"/>
<dbReference type="EMBL" id="AJ554057">
    <property type="protein sequence ID" value="CAD87970.1"/>
    <property type="molecule type" value="Genomic_DNA"/>
</dbReference>
<dbReference type="RefSeq" id="NP_944693.1">
    <property type="nucleotide sequence ID" value="NC_005274.1"/>
</dbReference>
<dbReference type="SMR" id="Q70RV4"/>
<dbReference type="GeneID" id="2658806"/>
<dbReference type="CTD" id="4539"/>
<dbReference type="GO" id="GO:0005743">
    <property type="term" value="C:mitochondrial inner membrane"/>
    <property type="evidence" value="ECO:0000250"/>
    <property type="project" value="UniProtKB"/>
</dbReference>
<dbReference type="GO" id="GO:0045271">
    <property type="term" value="C:respiratory chain complex I"/>
    <property type="evidence" value="ECO:0000250"/>
    <property type="project" value="UniProtKB"/>
</dbReference>
<dbReference type="GO" id="GO:0008137">
    <property type="term" value="F:NADH dehydrogenase (ubiquinone) activity"/>
    <property type="evidence" value="ECO:0000250"/>
    <property type="project" value="UniProtKB"/>
</dbReference>
<dbReference type="GO" id="GO:0042773">
    <property type="term" value="P:ATP synthesis coupled electron transport"/>
    <property type="evidence" value="ECO:0007669"/>
    <property type="project" value="InterPro"/>
</dbReference>
<dbReference type="FunFam" id="1.10.287.3510:FF:000002">
    <property type="entry name" value="NADH-ubiquinone oxidoreductase chain 4L"/>
    <property type="match status" value="1"/>
</dbReference>
<dbReference type="Gene3D" id="1.10.287.3510">
    <property type="match status" value="1"/>
</dbReference>
<dbReference type="InterPro" id="IPR001133">
    <property type="entry name" value="NADH_UbQ_OxRdtase_chain4L/K"/>
</dbReference>
<dbReference type="InterPro" id="IPR039428">
    <property type="entry name" value="NUOK/Mnh_C1-like"/>
</dbReference>
<dbReference type="PANTHER" id="PTHR11434:SF0">
    <property type="entry name" value="NADH-UBIQUINONE OXIDOREDUCTASE CHAIN 4L"/>
    <property type="match status" value="1"/>
</dbReference>
<dbReference type="PANTHER" id="PTHR11434">
    <property type="entry name" value="NADH-UBIQUINONE OXIDOREDUCTASE SUBUNIT ND4L"/>
    <property type="match status" value="1"/>
</dbReference>
<dbReference type="Pfam" id="PF00420">
    <property type="entry name" value="Oxidored_q2"/>
    <property type="match status" value="1"/>
</dbReference>
<protein>
    <recommendedName>
        <fullName>NADH-ubiquinone oxidoreductase chain 4L</fullName>
        <ecNumber>7.1.1.2</ecNumber>
    </recommendedName>
    <alternativeName>
        <fullName>NADH dehydrogenase subunit 4L</fullName>
    </alternativeName>
</protein>
<geneLocation type="mitochondrion"/>
<sequence length="98" mass="10776">MSLIYMNVMMAFTMSLTGLLMYRSHLMSALLCMEGMMLSLFILAALTILNSHFTLANMAPIILLVFAACEAAIGLALLVMISNTYGTDYVQNLNLLQC</sequence>
<gene>
    <name type="primary">MT-ND4L</name>
    <name type="synonym">MTND4L</name>
    <name type="synonym">NADH4L</name>
    <name type="synonym">ND4L</name>
</gene>
<accession>Q70RV4</accession>
<organism>
    <name type="scientific">Berardius bairdii</name>
    <name type="common">Baird's beaked whale</name>
    <name type="synonym">North Pacific bottle-nosed whale</name>
    <dbReference type="NCBI Taxonomy" id="48742"/>
    <lineage>
        <taxon>Eukaryota</taxon>
        <taxon>Metazoa</taxon>
        <taxon>Chordata</taxon>
        <taxon>Craniata</taxon>
        <taxon>Vertebrata</taxon>
        <taxon>Euteleostomi</taxon>
        <taxon>Mammalia</taxon>
        <taxon>Eutheria</taxon>
        <taxon>Laurasiatheria</taxon>
        <taxon>Artiodactyla</taxon>
        <taxon>Whippomorpha</taxon>
        <taxon>Cetacea</taxon>
        <taxon>Odontoceti</taxon>
        <taxon>Ziphiidae</taxon>
        <taxon>Berardius</taxon>
    </lineage>
</organism>
<proteinExistence type="inferred from homology"/>
<keyword id="KW-0249">Electron transport</keyword>
<keyword id="KW-0472">Membrane</keyword>
<keyword id="KW-0496">Mitochondrion</keyword>
<keyword id="KW-0999">Mitochondrion inner membrane</keyword>
<keyword id="KW-0520">NAD</keyword>
<keyword id="KW-0679">Respiratory chain</keyword>
<keyword id="KW-1278">Translocase</keyword>
<keyword id="KW-0812">Transmembrane</keyword>
<keyword id="KW-1133">Transmembrane helix</keyword>
<keyword id="KW-0813">Transport</keyword>
<keyword id="KW-0830">Ubiquinone</keyword>
<name>NU4LM_BERBI</name>
<reference key="1">
    <citation type="journal article" date="2004" name="Gene">
        <title>Mitogenomic analyses provide new insights into cetacean origin and evolution.</title>
        <authorList>
            <person name="Arnason U."/>
            <person name="Gullberg A."/>
            <person name="Janke A."/>
        </authorList>
    </citation>
    <scope>NUCLEOTIDE SEQUENCE [GENOMIC DNA]</scope>
</reference>